<accession>P58344</accession>
<reference key="1">
    <citation type="journal article" date="2001" name="Nature">
        <title>Genome sequence of enterohaemorrhagic Escherichia coli O157:H7.</title>
        <authorList>
            <person name="Perna N.T."/>
            <person name="Plunkett G. III"/>
            <person name="Burland V."/>
            <person name="Mau B."/>
            <person name="Glasner J.D."/>
            <person name="Rose D.J."/>
            <person name="Mayhew G.F."/>
            <person name="Evans P.S."/>
            <person name="Gregor J."/>
            <person name="Kirkpatrick H.A."/>
            <person name="Posfai G."/>
            <person name="Hackett J."/>
            <person name="Klink S."/>
            <person name="Boutin A."/>
            <person name="Shao Y."/>
            <person name="Miller L."/>
            <person name="Grotbeck E.J."/>
            <person name="Davis N.W."/>
            <person name="Lim A."/>
            <person name="Dimalanta E.T."/>
            <person name="Potamousis K."/>
            <person name="Apodaca J."/>
            <person name="Anantharaman T.S."/>
            <person name="Lin J."/>
            <person name="Yen G."/>
            <person name="Schwartz D.C."/>
            <person name="Welch R.A."/>
            <person name="Blattner F.R."/>
        </authorList>
    </citation>
    <scope>NUCLEOTIDE SEQUENCE [LARGE SCALE GENOMIC DNA]</scope>
    <source>
        <strain>O157:H7 / EDL933 / ATCC 700927 / EHEC</strain>
    </source>
</reference>
<reference key="2">
    <citation type="journal article" date="2001" name="DNA Res.">
        <title>Complete genome sequence of enterohemorrhagic Escherichia coli O157:H7 and genomic comparison with a laboratory strain K-12.</title>
        <authorList>
            <person name="Hayashi T."/>
            <person name="Makino K."/>
            <person name="Ohnishi M."/>
            <person name="Kurokawa K."/>
            <person name="Ishii K."/>
            <person name="Yokoyama K."/>
            <person name="Han C.-G."/>
            <person name="Ohtsubo E."/>
            <person name="Nakayama K."/>
            <person name="Murata T."/>
            <person name="Tanaka M."/>
            <person name="Tobe T."/>
            <person name="Iida T."/>
            <person name="Takami H."/>
            <person name="Honda T."/>
            <person name="Sasakawa C."/>
            <person name="Ogasawara N."/>
            <person name="Yasunaga T."/>
            <person name="Kuhara S."/>
            <person name="Shiba T."/>
            <person name="Hattori M."/>
            <person name="Shinagawa H."/>
        </authorList>
    </citation>
    <scope>NUCLEOTIDE SEQUENCE [LARGE SCALE GENOMIC DNA]</scope>
    <source>
        <strain>O157:H7 / Sakai / RIMD 0509952 / EHEC</strain>
    </source>
</reference>
<feature type="chain" id="PRO_0000214270" description="Ion-translocating oxidoreductase complex subunit E">
    <location>
        <begin position="1"/>
        <end position="231"/>
    </location>
</feature>
<feature type="transmembrane region" description="Helical" evidence="1">
    <location>
        <begin position="18"/>
        <end position="38"/>
    </location>
</feature>
<feature type="transmembrane region" description="Helical" evidence="1">
    <location>
        <begin position="39"/>
        <end position="59"/>
    </location>
</feature>
<feature type="transmembrane region" description="Helical" evidence="1">
    <location>
        <begin position="63"/>
        <end position="83"/>
    </location>
</feature>
<feature type="transmembrane region" description="Helical" evidence="1">
    <location>
        <begin position="86"/>
        <end position="106"/>
    </location>
</feature>
<feature type="transmembrane region" description="Helical" evidence="1">
    <location>
        <begin position="125"/>
        <end position="145"/>
    </location>
</feature>
<feature type="transmembrane region" description="Helical" evidence="1">
    <location>
        <begin position="182"/>
        <end position="202"/>
    </location>
</feature>
<evidence type="ECO:0000255" key="1">
    <source>
        <dbReference type="HAMAP-Rule" id="MF_00478"/>
    </source>
</evidence>
<protein>
    <recommendedName>
        <fullName evidence="1">Ion-translocating oxidoreductase complex subunit E</fullName>
        <ecNumber evidence="1">7.-.-.-</ecNumber>
    </recommendedName>
    <alternativeName>
        <fullName evidence="1">Rsx electron transport complex subunit E</fullName>
    </alternativeName>
</protein>
<organism>
    <name type="scientific">Escherichia coli O157:H7</name>
    <dbReference type="NCBI Taxonomy" id="83334"/>
    <lineage>
        <taxon>Bacteria</taxon>
        <taxon>Pseudomonadati</taxon>
        <taxon>Pseudomonadota</taxon>
        <taxon>Gammaproteobacteria</taxon>
        <taxon>Enterobacterales</taxon>
        <taxon>Enterobacteriaceae</taxon>
        <taxon>Escherichia</taxon>
    </lineage>
</organism>
<dbReference type="EC" id="7.-.-.-" evidence="1"/>
<dbReference type="EMBL" id="AE005174">
    <property type="protein sequence ID" value="AAG56621.1"/>
    <property type="molecule type" value="Genomic_DNA"/>
</dbReference>
<dbReference type="EMBL" id="BA000007">
    <property type="protein sequence ID" value="BAB35764.1"/>
    <property type="molecule type" value="Genomic_DNA"/>
</dbReference>
<dbReference type="PIR" id="A85770">
    <property type="entry name" value="A85770"/>
</dbReference>
<dbReference type="PIR" id="E90921">
    <property type="entry name" value="E90921"/>
</dbReference>
<dbReference type="RefSeq" id="NP_310368.1">
    <property type="nucleotide sequence ID" value="NC_002695.1"/>
</dbReference>
<dbReference type="RefSeq" id="WP_001289657.1">
    <property type="nucleotide sequence ID" value="NZ_VOAI01000007.1"/>
</dbReference>
<dbReference type="SMR" id="P58344"/>
<dbReference type="STRING" id="155864.Z2642"/>
<dbReference type="GeneID" id="913729"/>
<dbReference type="GeneID" id="93775784"/>
<dbReference type="KEGG" id="ece:Z2642"/>
<dbReference type="KEGG" id="ecs:ECs_2341"/>
<dbReference type="PATRIC" id="fig|386585.9.peg.2450"/>
<dbReference type="eggNOG" id="COG4660">
    <property type="taxonomic scope" value="Bacteria"/>
</dbReference>
<dbReference type="HOGENOM" id="CLU_046659_1_0_6"/>
<dbReference type="OMA" id="RIEVFHT"/>
<dbReference type="Proteomes" id="UP000000558">
    <property type="component" value="Chromosome"/>
</dbReference>
<dbReference type="Proteomes" id="UP000002519">
    <property type="component" value="Chromosome"/>
</dbReference>
<dbReference type="GO" id="GO:0005886">
    <property type="term" value="C:plasma membrane"/>
    <property type="evidence" value="ECO:0007669"/>
    <property type="project" value="UniProtKB-SubCell"/>
</dbReference>
<dbReference type="GO" id="GO:0022900">
    <property type="term" value="P:electron transport chain"/>
    <property type="evidence" value="ECO:0007669"/>
    <property type="project" value="UniProtKB-UniRule"/>
</dbReference>
<dbReference type="HAMAP" id="MF_00478">
    <property type="entry name" value="RsxE_RnfE"/>
    <property type="match status" value="1"/>
</dbReference>
<dbReference type="InterPro" id="IPR003667">
    <property type="entry name" value="NqrDE/RnfAE"/>
</dbReference>
<dbReference type="InterPro" id="IPR010968">
    <property type="entry name" value="RnfE"/>
</dbReference>
<dbReference type="NCBIfam" id="NF009070">
    <property type="entry name" value="PRK12405.1"/>
    <property type="match status" value="1"/>
</dbReference>
<dbReference type="NCBIfam" id="TIGR01948">
    <property type="entry name" value="rnfE"/>
    <property type="match status" value="1"/>
</dbReference>
<dbReference type="PANTHER" id="PTHR30586">
    <property type="entry name" value="ELECTRON TRANSPORT COMPLEX PROTEIN RNFE"/>
    <property type="match status" value="1"/>
</dbReference>
<dbReference type="PANTHER" id="PTHR30586:SF0">
    <property type="entry name" value="ION-TRANSLOCATING OXIDOREDUCTASE COMPLEX SUBUNIT E"/>
    <property type="match status" value="1"/>
</dbReference>
<dbReference type="Pfam" id="PF02508">
    <property type="entry name" value="Rnf-Nqr"/>
    <property type="match status" value="1"/>
</dbReference>
<dbReference type="PIRSF" id="PIRSF006102">
    <property type="entry name" value="NQR_DE"/>
    <property type="match status" value="1"/>
</dbReference>
<proteinExistence type="inferred from homology"/>
<keyword id="KW-0997">Cell inner membrane</keyword>
<keyword id="KW-1003">Cell membrane</keyword>
<keyword id="KW-0249">Electron transport</keyword>
<keyword id="KW-0472">Membrane</keyword>
<keyword id="KW-1185">Reference proteome</keyword>
<keyword id="KW-1278">Translocase</keyword>
<keyword id="KW-0812">Transmembrane</keyword>
<keyword id="KW-1133">Transmembrane helix</keyword>
<keyword id="KW-0813">Transport</keyword>
<comment type="function">
    <text evidence="1">Part of a membrane-bound complex that couples electron transfer with translocation of ions across the membrane. Required to maintain the reduced state of SoxR.</text>
</comment>
<comment type="subunit">
    <text evidence="1">The complex is composed of six subunits: RsxA, RsxB, RsxC, RsxD, RsxE and RsxG.</text>
</comment>
<comment type="subcellular location">
    <subcellularLocation>
        <location evidence="1">Cell inner membrane</location>
        <topology evidence="1">Multi-pass membrane protein</topology>
    </subcellularLocation>
</comment>
<comment type="similarity">
    <text evidence="1">Belongs to the NqrDE/RnfAE family.</text>
</comment>
<name>RSXE_ECO57</name>
<sequence length="231" mass="24489">MSEIKDVIVQGLWKNNSALVQLLGLCPLLAVTSTATNALGLGLATTLVLTLTNLTISTLRHWTPAEIRIPIYVMIIASVVSAVQMLINAYAFGLYQSLGIFIPLIVTNCIVVGRAEAFAAKKGPALSALDGFSIGMGATCAMFVLGSLREIIGNGTLFDGADALLGSWAKVLRVEIFHTDSPFLLAMLPPGAFIGLGLMLAGKYLIDERMKKRRTEAAAERALPNGETGNV</sequence>
<gene>
    <name evidence="1" type="primary">rsxE</name>
    <name type="ordered locus">Z2642</name>
    <name type="ordered locus">ECs2341</name>
</gene>